<comment type="cofactor">
    <cofactor evidence="1">
        <name>Zn(2+)</name>
        <dbReference type="ChEBI" id="CHEBI:29105"/>
    </cofactor>
    <text evidence="1">Binds 3 Zn(2+) ions per subunit.</text>
</comment>
<comment type="similarity">
    <text evidence="1">Belongs to the PHP family.</text>
</comment>
<sequence length="248" mass="27613">MDIVVDSHTHTIASGHAYSTILENALAAKNKGLKLLCTTDHAPEMPGAPHYWHFNNQRILPRFLHEVGILRGVEANTLNVKGEIDLPLSSDQHLDWVIASFHEPVFRPATEAEHTAALINVIKSGRVDVLGHLGNPNYPFDMEQVLRCAKSHNVAIEVNNTSLTGKSRKGSDARCDQIVALGKEIGVYFSTGSDAHFCEEISKLDLAIELLEKHGVEKDKILTTSTRRFLKFLLLRGKPRIPEFDAFY</sequence>
<feature type="chain" id="PRO_0000228710" description="Probable phosphatase VPA0505">
    <location>
        <begin position="1"/>
        <end position="248"/>
    </location>
</feature>
<feature type="binding site" evidence="1">
    <location>
        <position position="8"/>
    </location>
    <ligand>
        <name>Zn(2+)</name>
        <dbReference type="ChEBI" id="CHEBI:29105"/>
        <label>1</label>
    </ligand>
</feature>
<feature type="binding site" evidence="1">
    <location>
        <position position="10"/>
    </location>
    <ligand>
        <name>Zn(2+)</name>
        <dbReference type="ChEBI" id="CHEBI:29105"/>
        <label>1</label>
    </ligand>
</feature>
<feature type="binding site" evidence="1">
    <location>
        <position position="16"/>
    </location>
    <ligand>
        <name>Zn(2+)</name>
        <dbReference type="ChEBI" id="CHEBI:29105"/>
        <label>2</label>
    </ligand>
</feature>
<feature type="binding site" evidence="1">
    <location>
        <position position="41"/>
    </location>
    <ligand>
        <name>Zn(2+)</name>
        <dbReference type="ChEBI" id="CHEBI:29105"/>
        <label>2</label>
    </ligand>
</feature>
<feature type="binding site" evidence="1">
    <location>
        <position position="74"/>
    </location>
    <ligand>
        <name>Zn(2+)</name>
        <dbReference type="ChEBI" id="CHEBI:29105"/>
        <label>1</label>
    </ligand>
</feature>
<feature type="binding site" evidence="1">
    <location>
        <position position="74"/>
    </location>
    <ligand>
        <name>Zn(2+)</name>
        <dbReference type="ChEBI" id="CHEBI:29105"/>
        <label>3</label>
    </ligand>
</feature>
<feature type="binding site" evidence="1">
    <location>
        <position position="102"/>
    </location>
    <ligand>
        <name>Zn(2+)</name>
        <dbReference type="ChEBI" id="CHEBI:29105"/>
        <label>3</label>
    </ligand>
</feature>
<feature type="binding site" evidence="1">
    <location>
        <position position="132"/>
    </location>
    <ligand>
        <name>Zn(2+)</name>
        <dbReference type="ChEBI" id="CHEBI:29105"/>
        <label>3</label>
    </ligand>
</feature>
<feature type="binding site" evidence="1">
    <location>
        <position position="194"/>
    </location>
    <ligand>
        <name>Zn(2+)</name>
        <dbReference type="ChEBI" id="CHEBI:29105"/>
        <label>1</label>
    </ligand>
</feature>
<feature type="binding site" evidence="1">
    <location>
        <position position="196"/>
    </location>
    <ligand>
        <name>Zn(2+)</name>
        <dbReference type="ChEBI" id="CHEBI:29105"/>
        <label>2</label>
    </ligand>
</feature>
<accession>Q87IV1</accession>
<name>Y4505_VIBPA</name>
<gene>
    <name type="ordered locus">VPA0505</name>
</gene>
<keyword id="KW-0378">Hydrolase</keyword>
<keyword id="KW-0479">Metal-binding</keyword>
<keyword id="KW-0862">Zinc</keyword>
<dbReference type="EC" id="3.1.3.-" evidence="1"/>
<dbReference type="EMBL" id="BA000032">
    <property type="protein sequence ID" value="BAC61848.1"/>
    <property type="molecule type" value="Genomic_DNA"/>
</dbReference>
<dbReference type="RefSeq" id="NP_800015.1">
    <property type="nucleotide sequence ID" value="NC_004605.1"/>
</dbReference>
<dbReference type="RefSeq" id="WP_005482669.1">
    <property type="nucleotide sequence ID" value="NC_004605.1"/>
</dbReference>
<dbReference type="SMR" id="Q87IV1"/>
<dbReference type="GeneID" id="1191193"/>
<dbReference type="KEGG" id="vpa:VPA0505"/>
<dbReference type="PATRIC" id="fig|223926.6.peg.3449"/>
<dbReference type="eggNOG" id="COG1387">
    <property type="taxonomic scope" value="Bacteria"/>
</dbReference>
<dbReference type="HOGENOM" id="CLU_061999_0_1_6"/>
<dbReference type="Proteomes" id="UP000002493">
    <property type="component" value="Chromosome 2"/>
</dbReference>
<dbReference type="GO" id="GO:0005829">
    <property type="term" value="C:cytosol"/>
    <property type="evidence" value="ECO:0007669"/>
    <property type="project" value="TreeGrafter"/>
</dbReference>
<dbReference type="GO" id="GO:0016791">
    <property type="term" value="F:phosphatase activity"/>
    <property type="evidence" value="ECO:0007669"/>
    <property type="project" value="UniProtKB-UniRule"/>
</dbReference>
<dbReference type="GO" id="GO:0008270">
    <property type="term" value="F:zinc ion binding"/>
    <property type="evidence" value="ECO:0007669"/>
    <property type="project" value="UniProtKB-UniRule"/>
</dbReference>
<dbReference type="GO" id="GO:0071978">
    <property type="term" value="P:bacterial-type flagellum-dependent swarming motility"/>
    <property type="evidence" value="ECO:0007669"/>
    <property type="project" value="TreeGrafter"/>
</dbReference>
<dbReference type="CDD" id="cd07437">
    <property type="entry name" value="PHP_HisPPase_Ycdx_like"/>
    <property type="match status" value="1"/>
</dbReference>
<dbReference type="Gene3D" id="3.20.20.140">
    <property type="entry name" value="Metal-dependent hydrolases"/>
    <property type="match status" value="1"/>
</dbReference>
<dbReference type="HAMAP" id="MF_01561">
    <property type="entry name" value="YcdX_phosphat"/>
    <property type="match status" value="1"/>
</dbReference>
<dbReference type="InterPro" id="IPR023710">
    <property type="entry name" value="Phosphatase_YcdX_put"/>
</dbReference>
<dbReference type="InterPro" id="IPR004013">
    <property type="entry name" value="PHP_dom"/>
</dbReference>
<dbReference type="InterPro" id="IPR050243">
    <property type="entry name" value="PHP_phosphatase"/>
</dbReference>
<dbReference type="InterPro" id="IPR003141">
    <property type="entry name" value="Pol/His_phosphatase_N"/>
</dbReference>
<dbReference type="InterPro" id="IPR016195">
    <property type="entry name" value="Pol/histidinol_Pase-like"/>
</dbReference>
<dbReference type="NCBIfam" id="NF006702">
    <property type="entry name" value="PRK09248.1"/>
    <property type="match status" value="1"/>
</dbReference>
<dbReference type="PANTHER" id="PTHR36928">
    <property type="entry name" value="PHOSPHATASE YCDX-RELATED"/>
    <property type="match status" value="1"/>
</dbReference>
<dbReference type="PANTHER" id="PTHR36928:SF1">
    <property type="entry name" value="PHOSPHATASE YCDX-RELATED"/>
    <property type="match status" value="1"/>
</dbReference>
<dbReference type="Pfam" id="PF02811">
    <property type="entry name" value="PHP"/>
    <property type="match status" value="1"/>
</dbReference>
<dbReference type="SMART" id="SM00481">
    <property type="entry name" value="POLIIIAc"/>
    <property type="match status" value="1"/>
</dbReference>
<dbReference type="SUPFAM" id="SSF89550">
    <property type="entry name" value="PHP domain-like"/>
    <property type="match status" value="1"/>
</dbReference>
<organism>
    <name type="scientific">Vibrio parahaemolyticus serotype O3:K6 (strain RIMD 2210633)</name>
    <dbReference type="NCBI Taxonomy" id="223926"/>
    <lineage>
        <taxon>Bacteria</taxon>
        <taxon>Pseudomonadati</taxon>
        <taxon>Pseudomonadota</taxon>
        <taxon>Gammaproteobacteria</taxon>
        <taxon>Vibrionales</taxon>
        <taxon>Vibrionaceae</taxon>
        <taxon>Vibrio</taxon>
    </lineage>
</organism>
<reference key="1">
    <citation type="journal article" date="2003" name="Lancet">
        <title>Genome sequence of Vibrio parahaemolyticus: a pathogenic mechanism distinct from that of V. cholerae.</title>
        <authorList>
            <person name="Makino K."/>
            <person name="Oshima K."/>
            <person name="Kurokawa K."/>
            <person name="Yokoyama K."/>
            <person name="Uda T."/>
            <person name="Tagomori K."/>
            <person name="Iijima Y."/>
            <person name="Najima M."/>
            <person name="Nakano M."/>
            <person name="Yamashita A."/>
            <person name="Kubota Y."/>
            <person name="Kimura S."/>
            <person name="Yasunaga T."/>
            <person name="Honda T."/>
            <person name="Shinagawa H."/>
            <person name="Hattori M."/>
            <person name="Iida T."/>
        </authorList>
    </citation>
    <scope>NUCLEOTIDE SEQUENCE [LARGE SCALE GENOMIC DNA]</scope>
    <source>
        <strain>RIMD 2210633</strain>
    </source>
</reference>
<evidence type="ECO:0000255" key="1">
    <source>
        <dbReference type="HAMAP-Rule" id="MF_01561"/>
    </source>
</evidence>
<protein>
    <recommendedName>
        <fullName evidence="1">Probable phosphatase VPA0505</fullName>
        <ecNumber evidence="1">3.1.3.-</ecNumber>
    </recommendedName>
</protein>
<proteinExistence type="inferred from homology"/>